<comment type="function">
    <text>In the hair cortex, hair keratin intermediate filaments are embedded in an interfilamentous matrix, consisting of hair keratin-associated proteins (KRTAP), which are essential for the formation of a rigid and resistant hair shaft through their extensive disulfide bond cross-linking with abundant cysteine residues of hair keratins. The matrix proteins include the high-sulfur and high-glycine-tyrosine keratins.</text>
</comment>
<comment type="subunit">
    <text>Interacts with hair keratins.</text>
</comment>
<comment type="tissue specificity">
    <text evidence="1">Expressed in the hair follicles.</text>
</comment>
<comment type="polymorphism">
    <text evidence="1">Numerous size polymorphism are present in KRTAP4 gene family, which are mainly due to variations in the sequence encoding cysteine-rich repeat segments (PubMed:15955084). The sequence shown corresponds to allele KAP4.8-v1 (PubMed:15955084).</text>
</comment>
<comment type="similarity">
    <text evidence="2">Belongs to the KRTAP type 4 family.</text>
</comment>
<reference key="1">
    <citation type="journal article" date="2006" name="Nature">
        <title>DNA sequence of human chromosome 17 and analysis of rearrangement in the human lineage.</title>
        <authorList>
            <person name="Zody M.C."/>
            <person name="Garber M."/>
            <person name="Adams D.J."/>
            <person name="Sharpe T."/>
            <person name="Harrow J."/>
            <person name="Lupski J.R."/>
            <person name="Nicholson C."/>
            <person name="Searle S.M."/>
            <person name="Wilming L."/>
            <person name="Young S.K."/>
            <person name="Abouelleil A."/>
            <person name="Allen N.R."/>
            <person name="Bi W."/>
            <person name="Bloom T."/>
            <person name="Borowsky M.L."/>
            <person name="Bugalter B.E."/>
            <person name="Butler J."/>
            <person name="Chang J.L."/>
            <person name="Chen C.-K."/>
            <person name="Cook A."/>
            <person name="Corum B."/>
            <person name="Cuomo C.A."/>
            <person name="de Jong P.J."/>
            <person name="DeCaprio D."/>
            <person name="Dewar K."/>
            <person name="FitzGerald M."/>
            <person name="Gilbert J."/>
            <person name="Gibson R."/>
            <person name="Gnerre S."/>
            <person name="Goldstein S."/>
            <person name="Grafham D.V."/>
            <person name="Grocock R."/>
            <person name="Hafez N."/>
            <person name="Hagopian D.S."/>
            <person name="Hart E."/>
            <person name="Norman C.H."/>
            <person name="Humphray S."/>
            <person name="Jaffe D.B."/>
            <person name="Jones M."/>
            <person name="Kamal M."/>
            <person name="Khodiyar V.K."/>
            <person name="LaButti K."/>
            <person name="Laird G."/>
            <person name="Lehoczky J."/>
            <person name="Liu X."/>
            <person name="Lokyitsang T."/>
            <person name="Loveland J."/>
            <person name="Lui A."/>
            <person name="Macdonald P."/>
            <person name="Major J.E."/>
            <person name="Matthews L."/>
            <person name="Mauceli E."/>
            <person name="McCarroll S.A."/>
            <person name="Mihalev A.H."/>
            <person name="Mudge J."/>
            <person name="Nguyen C."/>
            <person name="Nicol R."/>
            <person name="O'Leary S.B."/>
            <person name="Osoegawa K."/>
            <person name="Schwartz D.C."/>
            <person name="Shaw-Smith C."/>
            <person name="Stankiewicz P."/>
            <person name="Steward C."/>
            <person name="Swarbreck D."/>
            <person name="Venkataraman V."/>
            <person name="Whittaker C.A."/>
            <person name="Yang X."/>
            <person name="Zimmer A.R."/>
            <person name="Bradley A."/>
            <person name="Hubbard T."/>
            <person name="Birren B.W."/>
            <person name="Rogers J."/>
            <person name="Lander E.S."/>
            <person name="Nusbaum C."/>
        </authorList>
    </citation>
    <scope>NUCLEOTIDE SEQUENCE [LARGE SCALE GENOMIC DNA]</scope>
</reference>
<reference key="2">
    <citation type="journal article" date="2001" name="J. Biol. Chem.">
        <title>Characterization of a cluster of human high/ultrahigh sulfur keratin-associated protein genes embedded in the type I keratin gene domain on chromosome 17q12-21.</title>
        <authorList>
            <person name="Rogers M.A."/>
            <person name="Langbein L."/>
            <person name="Winter H."/>
            <person name="Ehmann C."/>
            <person name="Praetzel S."/>
            <person name="Korn B."/>
            <person name="Schweizer J."/>
        </authorList>
    </citation>
    <scope>NUCLEOTIDE SEQUENCE [MRNA] OF 72-185</scope>
    <source>
        <tissue>Scalp</tissue>
    </source>
</reference>
<reference key="3">
    <citation type="journal article" date="2005" name="J. Invest. Dermatol.">
        <title>Size polymorphisms in the human ultrahigh sulfur hair keratin-associated protein 4, KAP4, gene family.</title>
        <authorList>
            <person name="Kariya N."/>
            <person name="Shimomura Y."/>
            <person name="Ito M."/>
        </authorList>
    </citation>
    <scope>TISSUE SPECIFICITY</scope>
    <scope>POLYMORPHISM</scope>
</reference>
<sequence length="185" mass="19627">MVNSCCGSVCSDQGCGQDLCQETCCCPSCCQTTCCRTTCYRPSYSVSCCCRPQCCQSVCCQPTCCRPSCCVSSCCKPQCCQSVCCQPTCCHPSCCISSCCRPSCCVSSCCKPQCCQSVCCQPNCCRPSCSISSCCRPSCCESSCCRPCCCLRPVCGRVSCHTTCYRPACVISTCPRPVCCASSCC</sequence>
<organism>
    <name type="scientific">Homo sapiens</name>
    <name type="common">Human</name>
    <dbReference type="NCBI Taxonomy" id="9606"/>
    <lineage>
        <taxon>Eukaryota</taxon>
        <taxon>Metazoa</taxon>
        <taxon>Chordata</taxon>
        <taxon>Craniata</taxon>
        <taxon>Vertebrata</taxon>
        <taxon>Euteleostomi</taxon>
        <taxon>Mammalia</taxon>
        <taxon>Eutheria</taxon>
        <taxon>Euarchontoglires</taxon>
        <taxon>Primates</taxon>
        <taxon>Haplorrhini</taxon>
        <taxon>Catarrhini</taxon>
        <taxon>Hominidae</taxon>
        <taxon>Homo</taxon>
    </lineage>
</organism>
<proteinExistence type="evidence at protein level"/>
<evidence type="ECO:0000269" key="1">
    <source>
    </source>
</evidence>
<evidence type="ECO:0000305" key="2"/>
<accession>Q9BYQ9</accession>
<accession>A8MSH3</accession>
<feature type="chain" id="PRO_0000185175" description="Keratin-associated protein 4-8">
    <location>
        <begin position="1"/>
        <end position="185"/>
    </location>
</feature>
<feature type="repeat" description="1">
    <location>
        <begin position="14"/>
        <end position="18"/>
    </location>
</feature>
<feature type="repeat" description="2">
    <location>
        <begin position="19"/>
        <end position="23"/>
    </location>
</feature>
<feature type="repeat" description="3">
    <location>
        <begin position="24"/>
        <end position="28"/>
    </location>
</feature>
<feature type="repeat" description="4">
    <location>
        <begin position="39"/>
        <end position="43"/>
    </location>
</feature>
<feature type="repeat" description="5">
    <location>
        <begin position="44"/>
        <end position="48"/>
    </location>
</feature>
<feature type="repeat" description="6">
    <location>
        <begin position="49"/>
        <end position="53"/>
    </location>
</feature>
<feature type="repeat" description="7">
    <location>
        <begin position="54"/>
        <end position="58"/>
    </location>
</feature>
<feature type="repeat" description="8">
    <location>
        <begin position="59"/>
        <end position="63"/>
    </location>
</feature>
<feature type="repeat" description="9">
    <location>
        <begin position="64"/>
        <end position="68"/>
    </location>
</feature>
<feature type="repeat" description="10">
    <location>
        <begin position="69"/>
        <end position="73"/>
    </location>
</feature>
<feature type="repeat" description="11">
    <location>
        <begin position="74"/>
        <end position="78"/>
    </location>
</feature>
<feature type="repeat" description="12">
    <location>
        <begin position="79"/>
        <end position="83"/>
    </location>
</feature>
<feature type="repeat" description="13">
    <location>
        <begin position="84"/>
        <end position="88"/>
    </location>
</feature>
<feature type="repeat" description="14">
    <location>
        <begin position="89"/>
        <end position="93"/>
    </location>
</feature>
<feature type="repeat" description="15">
    <location>
        <begin position="94"/>
        <end position="98"/>
    </location>
</feature>
<feature type="repeat" description="16">
    <location>
        <begin position="99"/>
        <end position="103"/>
    </location>
</feature>
<feature type="repeat" description="17">
    <location>
        <begin position="104"/>
        <end position="108"/>
    </location>
</feature>
<feature type="repeat" description="18">
    <location>
        <begin position="109"/>
        <end position="113"/>
    </location>
</feature>
<feature type="repeat" description="19">
    <location>
        <begin position="114"/>
        <end position="118"/>
    </location>
</feature>
<feature type="repeat" description="20">
    <location>
        <begin position="119"/>
        <end position="123"/>
    </location>
</feature>
<feature type="repeat" description="21">
    <location>
        <begin position="124"/>
        <end position="128"/>
    </location>
</feature>
<feature type="repeat" description="22">
    <location>
        <begin position="134"/>
        <end position="138"/>
    </location>
</feature>
<feature type="repeat" description="23">
    <location>
        <begin position="139"/>
        <end position="143"/>
    </location>
</feature>
<feature type="repeat" description="24">
    <location>
        <begin position="144"/>
        <end position="148"/>
    </location>
</feature>
<feature type="repeat" description="25">
    <location>
        <begin position="149"/>
        <end position="164"/>
    </location>
</feature>
<feature type="region of interest" description="25 X 5 AA repeats of C-C-[IKRQVHEC]-[SPRT]-[STCVQPR]">
    <location>
        <begin position="14"/>
        <end position="164"/>
    </location>
</feature>
<feature type="sequence conflict" description="In Ref. 2; CAC27579." evidence="2" ref="2">
    <original>N</original>
    <variation>T</variation>
    <location>
        <position position="123"/>
    </location>
</feature>
<feature type="sequence conflict" description="In Ref. 2; CAC27579." evidence="2" ref="2">
    <original>R</original>
    <variation>H</variation>
    <location>
        <position position="126"/>
    </location>
</feature>
<feature type="sequence conflict" description="In Ref. 2; CAC27579." evidence="2" ref="2">
    <original>L</original>
    <variation>V</variation>
    <location>
        <position position="151"/>
    </location>
</feature>
<feature type="sequence conflict" description="In Ref. 2; CAC27579." evidence="2" ref="2">
    <original>A</original>
    <variation>T</variation>
    <location>
        <position position="168"/>
    </location>
</feature>
<gene>
    <name type="primary">KRTAP4-8</name>
    <name type="synonym">KAP4.8</name>
    <name type="synonym">KRTAP4.8</name>
</gene>
<keyword id="KW-0416">Keratin</keyword>
<keyword id="KW-1267">Proteomics identification</keyword>
<keyword id="KW-1185">Reference proteome</keyword>
<keyword id="KW-0677">Repeat</keyword>
<name>KRA48_HUMAN</name>
<dbReference type="EMBL" id="AC037482">
    <property type="status" value="NOT_ANNOTATED_CDS"/>
    <property type="molecule type" value="Genomic_DNA"/>
</dbReference>
<dbReference type="EMBL" id="AJ406940">
    <property type="protein sequence ID" value="CAC27579.1"/>
    <property type="molecule type" value="mRNA"/>
</dbReference>
<dbReference type="CCDS" id="CCDS45674.1"/>
<dbReference type="RefSeq" id="NP_114166.1">
    <property type="nucleotide sequence ID" value="NM_031960.3"/>
</dbReference>
<dbReference type="FunCoup" id="Q9BYQ9">
    <property type="interactions" value="25"/>
</dbReference>
<dbReference type="STRING" id="9606.ENSP00000328444"/>
<dbReference type="BioMuta" id="KRTAP4-8"/>
<dbReference type="DMDM" id="327478604"/>
<dbReference type="MassIVE" id="Q9BYQ9"/>
<dbReference type="PaxDb" id="9606-ENSP00000328444"/>
<dbReference type="PeptideAtlas" id="Q9BYQ9"/>
<dbReference type="DNASU" id="728224"/>
<dbReference type="Ensembl" id="ENST00000333822.5">
    <property type="protein sequence ID" value="ENSP00000328444.4"/>
    <property type="gene ID" value="ENSG00000204880.9"/>
</dbReference>
<dbReference type="Ensembl" id="ENST00000709606.1">
    <property type="protein sequence ID" value="ENSP00000517793.1"/>
    <property type="gene ID" value="ENSG00000292042.1"/>
</dbReference>
<dbReference type="GeneID" id="728224"/>
<dbReference type="KEGG" id="hsa:728224"/>
<dbReference type="MANE-Select" id="ENST00000333822.5">
    <property type="protein sequence ID" value="ENSP00000328444.4"/>
    <property type="RefSeq nucleotide sequence ID" value="NM_031960.3"/>
    <property type="RefSeq protein sequence ID" value="NP_114166.1"/>
</dbReference>
<dbReference type="UCSC" id="uc060fao.1">
    <property type="organism name" value="human"/>
</dbReference>
<dbReference type="AGR" id="HGNC:17230"/>
<dbReference type="CTD" id="728224"/>
<dbReference type="GeneCards" id="KRTAP4-8"/>
<dbReference type="HGNC" id="HGNC:17230">
    <property type="gene designation" value="KRTAP4-8"/>
</dbReference>
<dbReference type="HPA" id="ENSG00000204880">
    <property type="expression patterns" value="Tissue enriched (skin)"/>
</dbReference>
<dbReference type="neXtProt" id="NX_Q9BYQ9"/>
<dbReference type="OpenTargets" id="ENSG00000204880"/>
<dbReference type="PharmGKB" id="PA38442"/>
<dbReference type="VEuPathDB" id="HostDB:ENSG00000204880"/>
<dbReference type="eggNOG" id="KOG4726">
    <property type="taxonomic scope" value="Eukaryota"/>
</dbReference>
<dbReference type="GeneTree" id="ENSGT00940000163975"/>
<dbReference type="InParanoid" id="Q9BYQ9"/>
<dbReference type="OMA" id="MCRPTMC"/>
<dbReference type="OrthoDB" id="9486439at2759"/>
<dbReference type="PAN-GO" id="Q9BYQ9">
    <property type="GO annotations" value="0 GO annotations based on evolutionary models"/>
</dbReference>
<dbReference type="TreeFam" id="TF351356"/>
<dbReference type="PathwayCommons" id="Q9BYQ9"/>
<dbReference type="Reactome" id="R-HSA-6805567">
    <property type="pathway name" value="Keratinization"/>
</dbReference>
<dbReference type="BioGRID-ORCS" id="728224">
    <property type="hits" value="149 hits in 1041 CRISPR screens"/>
</dbReference>
<dbReference type="GenomeRNAi" id="728224"/>
<dbReference type="Pharos" id="Q9BYQ9">
    <property type="development level" value="Tbio"/>
</dbReference>
<dbReference type="PRO" id="PR:Q9BYQ9"/>
<dbReference type="Proteomes" id="UP000005640">
    <property type="component" value="Chromosome 17"/>
</dbReference>
<dbReference type="RNAct" id="Q9BYQ9">
    <property type="molecule type" value="protein"/>
</dbReference>
<dbReference type="Bgee" id="ENSG00000204880">
    <property type="expression patterns" value="Expressed in skin of abdomen and 21 other cell types or tissues"/>
</dbReference>
<dbReference type="ExpressionAtlas" id="Q9BYQ9">
    <property type="expression patterns" value="baseline and differential"/>
</dbReference>
<dbReference type="GO" id="GO:0005829">
    <property type="term" value="C:cytosol"/>
    <property type="evidence" value="ECO:0000304"/>
    <property type="project" value="Reactome"/>
</dbReference>
<dbReference type="GO" id="GO:0045095">
    <property type="term" value="C:keratin filament"/>
    <property type="evidence" value="ECO:0007669"/>
    <property type="project" value="InterPro"/>
</dbReference>
<dbReference type="GO" id="GO:0042633">
    <property type="term" value="P:hair cycle"/>
    <property type="evidence" value="ECO:0000314"/>
    <property type="project" value="UniProtKB"/>
</dbReference>
<dbReference type="InterPro" id="IPR002494">
    <property type="entry name" value="KAP"/>
</dbReference>
<dbReference type="PANTHER" id="PTHR23262">
    <property type="entry name" value="KERATIN ASSOCIATED PROTEIN"/>
    <property type="match status" value="1"/>
</dbReference>
<dbReference type="PANTHER" id="PTHR23262:SF183">
    <property type="entry name" value="KERATIN-ASSOCIATED PROTEIN 4-11-RELATED"/>
    <property type="match status" value="1"/>
</dbReference>
<dbReference type="Pfam" id="PF13885">
    <property type="entry name" value="Keratin_B2_2"/>
    <property type="match status" value="3"/>
</dbReference>
<protein>
    <recommendedName>
        <fullName>Keratin-associated protein 4-8</fullName>
    </recommendedName>
    <alternativeName>
        <fullName>Keratin-associated protein 4.8</fullName>
    </alternativeName>
    <alternativeName>
        <fullName>Ultrahigh sulfur keratin-associated protein 4.8</fullName>
    </alternativeName>
</protein>